<dbReference type="EMBL" id="M62877">
    <property type="status" value="NOT_ANNOTATED_CDS"/>
    <property type="molecule type" value="Genomic_DNA"/>
</dbReference>
<dbReference type="SMR" id="P0DKA5"/>
<dbReference type="Proteomes" id="UP000009125">
    <property type="component" value="Segment"/>
</dbReference>
<dbReference type="GO" id="GO:0042025">
    <property type="term" value="C:host cell nucleus"/>
    <property type="evidence" value="ECO:0007669"/>
    <property type="project" value="UniProtKB-SubCell"/>
</dbReference>
<dbReference type="GO" id="GO:0003677">
    <property type="term" value="F:DNA binding"/>
    <property type="evidence" value="ECO:0007669"/>
    <property type="project" value="InterPro"/>
</dbReference>
<dbReference type="GO" id="GO:0003700">
    <property type="term" value="F:DNA-binding transcription factor activity"/>
    <property type="evidence" value="ECO:0007669"/>
    <property type="project" value="InterPro"/>
</dbReference>
<dbReference type="GO" id="GO:0006275">
    <property type="term" value="P:regulation of DNA replication"/>
    <property type="evidence" value="ECO:0007669"/>
    <property type="project" value="InterPro"/>
</dbReference>
<dbReference type="Gene3D" id="3.30.70.330">
    <property type="match status" value="1"/>
</dbReference>
<dbReference type="InterPro" id="IPR035975">
    <property type="entry name" value="E2/EBNA1_C_sf"/>
</dbReference>
<dbReference type="InterPro" id="IPR012677">
    <property type="entry name" value="Nucleotide-bd_a/b_plait_sf"/>
</dbReference>
<dbReference type="InterPro" id="IPR000427">
    <property type="entry name" value="Papillomavirus_E2_C"/>
</dbReference>
<dbReference type="Pfam" id="PF00511">
    <property type="entry name" value="PPV_E2_C"/>
    <property type="match status" value="1"/>
</dbReference>
<dbReference type="SUPFAM" id="SSF54957">
    <property type="entry name" value="Viral DNA-binding domain"/>
    <property type="match status" value="1"/>
</dbReference>
<protein>
    <recommendedName>
        <fullName>Protein E8^E2C</fullName>
    </recommendedName>
</protein>
<sequence length="172" mass="19101">MAIHKWKLWKQRCSTCSDALSTTTTVEQLSNTPTTNPLTTCVGAKEAQTQQRKRQRLTEPDSSTISPLSVDNTNNQIHCGSGSTNTGGHQSATQTAFIVHLKGDTNCLKCFRYRFTKHKGLYKNVSSTWHWTSNTKTGIVTIVFDSAHQRETFIKTIKVPPSVTLSLGIMTL</sequence>
<organismHost>
    <name type="scientific">Homo sapiens</name>
    <name type="common">Human</name>
    <dbReference type="NCBI Taxonomy" id="9606"/>
</organismHost>
<comment type="function">
    <text evidence="1">Plays a role in limiting the replication of viral DNA in keratinocytes. Recruits the host NCoR/SMRT complex to viral replication foci to mediate repression of both viral replication and transcription.</text>
</comment>
<comment type="subcellular location">
    <subcellularLocation>
        <location evidence="1">Host nucleus</location>
    </subcellularLocation>
</comment>
<comment type="similarity">
    <text evidence="3">Belongs to the papillomaviridae E8^E2C protein family.</text>
</comment>
<feature type="chain" id="PRO_0000438745" description="Protein E8^E2C">
    <location>
        <begin position="1"/>
        <end position="172"/>
    </location>
</feature>
<feature type="region of interest" description="Disordered" evidence="2">
    <location>
        <begin position="45"/>
        <end position="69"/>
    </location>
</feature>
<feature type="compositionally biased region" description="Polar residues" evidence="2">
    <location>
        <begin position="60"/>
        <end position="69"/>
    </location>
</feature>
<keyword id="KW-1048">Host nucleus</keyword>
<accession>P0DKA5</accession>
<evidence type="ECO:0000250" key="1">
    <source>
        <dbReference type="UniProtKB" id="P0DKA0"/>
    </source>
</evidence>
<evidence type="ECO:0000256" key="2">
    <source>
        <dbReference type="SAM" id="MobiDB-lite"/>
    </source>
</evidence>
<evidence type="ECO:0000305" key="3"/>
<proteinExistence type="inferred from homology"/>
<reference key="1">
    <citation type="journal article" date="1991" name="J. Virol.">
        <title>Biologic properties and nucleotide sequence analysis of human papillomavirus type 51.</title>
        <authorList>
            <person name="Lungu O."/>
            <person name="Crum C.P."/>
            <person name="Silverstein S.J."/>
        </authorList>
    </citation>
    <scope>NUCLEOTIDE SEQUENCE [GENOMIC DNA]</scope>
</reference>
<organism>
    <name type="scientific">Human papillomavirus 51</name>
    <dbReference type="NCBI Taxonomy" id="10595"/>
    <lineage>
        <taxon>Viruses</taxon>
        <taxon>Monodnaviria</taxon>
        <taxon>Shotokuvirae</taxon>
        <taxon>Cossaviricota</taxon>
        <taxon>Papovaviricetes</taxon>
        <taxon>Zurhausenvirales</taxon>
        <taxon>Papillomaviridae</taxon>
        <taxon>Firstpapillomavirinae</taxon>
        <taxon>Alphapapillomavirus</taxon>
        <taxon>Alphapapillomavirus 5</taxon>
    </lineage>
</organism>
<name>VE8E2_HPV51</name>